<protein>
    <recommendedName>
        <fullName evidence="15">Serine/threonine-protein kinase TBK1</fullName>
        <ecNumber evidence="12">2.7.11.1</ecNumber>
    </recommendedName>
    <alternativeName>
        <fullName evidence="14">T2K</fullName>
    </alternativeName>
    <alternativeName>
        <fullName evidence="13">TANK-binding kinase 1</fullName>
    </alternativeName>
</protein>
<comment type="function">
    <text evidence="1 4 7 8 9 12">Serine/threonine kinase that plays an essential role in regulating inflammatory responses to foreign agents (PubMed:10581243, PubMed:15210742, PubMed:15661922). Following activation of toll-like receptors by viral or bacterial components, associates with TRAF3 and TANK and phosphorylates interferon regulatory factors (IRFs) IRF3 and IRF7 as well as DDX3X (By similarity). This activity allows subsequent homodimerization and nuclear translocation of the IRFs leading to transcriptional activation of pro-inflammatory and antiviral genes including IFNA and IFNB (By similarity). In order to establish such an antiviral state, TBK1 form several different complexes whose composition depends on the type of cell and cellular stimuli (By similarity). Thus, several scaffolding molecules including FADD, TRADD, MAVS, AZI2, TANK or TBKBP1/SINTBAD can be recruited to the TBK1-containing-complexes (By similarity). Plays a key role in IRF3 activation: acts by first phosphorylating innate adapter proteins MAVS, STING1 and TICAM1 on their pLxIS motif, leading to recruitment of IRF3, thereby licensing IRF3 for phosphorylation by TBK1 (By similarity). Under particular conditions, functions as a NF-kappa-B effector by phosphorylating NF-kappa-B inhibitor alpha/NFKBIA, IKBKB or RELA to translocate NF-Kappa-B to the nucleus (By similarity). Restricts bacterial proliferation by phosphorylating the autophagy receptor OPTN/Optineurin on 'Ser-177', thus enhancing LC3 binding affinity and antibacterial autophagy (By similarity). Phosphorylates SMCR8 component of the C9orf72-SMCR8 complex, promoting autophagosome maturation (By similarity). Phosphorylates ATG8 proteins MAP1LC3C and GABARAPL2, thereby preventing their delipidation and premature removal from nascent autophagosomes (By similarity). Seems to play a role in energy balance regulation by sustaining a state of chronic, low-grade inflammation in obesity, which leads to a negative impact on insulin sensitivity (PubMed:23396211). Acts both as a positive and negative regulator of the mTORC1 complex, depending on the context: activates mTORC1 in response to growth factors by catalyzing phosphorylation of MTOR, while it limits the mTORC1 complex by promoting phosphorylation of RPTOR (By similarity). Acts as a positive regulator of the mTORC2 complex by mediating phosphorylation of MTOR, leading to increased phosphorylation and activation of AKT1 (PubMed:34245780). Phosphorylates and activates AKT1 (By similarity). Involved in the regulation of TNF-induced RIPK1-mediated cell death, probably acting via CYLD phosphorylation that in turn controls RIPK1 ubiquitination status (By similarity). Also participates in the differentiation of T follicular regulatory cells together with the receptor ICOS (By similarity).</text>
</comment>
<comment type="catalytic activity">
    <reaction evidence="12">
        <text>L-seryl-[protein] + ATP = O-phospho-L-seryl-[protein] + ADP + H(+)</text>
        <dbReference type="Rhea" id="RHEA:17989"/>
        <dbReference type="Rhea" id="RHEA-COMP:9863"/>
        <dbReference type="Rhea" id="RHEA-COMP:11604"/>
        <dbReference type="ChEBI" id="CHEBI:15378"/>
        <dbReference type="ChEBI" id="CHEBI:29999"/>
        <dbReference type="ChEBI" id="CHEBI:30616"/>
        <dbReference type="ChEBI" id="CHEBI:83421"/>
        <dbReference type="ChEBI" id="CHEBI:456216"/>
        <dbReference type="EC" id="2.7.11.1"/>
    </reaction>
</comment>
<comment type="catalytic activity">
    <reaction evidence="1">
        <text>L-threonyl-[protein] + ATP = O-phospho-L-threonyl-[protein] + ADP + H(+)</text>
        <dbReference type="Rhea" id="RHEA:46608"/>
        <dbReference type="Rhea" id="RHEA-COMP:11060"/>
        <dbReference type="Rhea" id="RHEA-COMP:11605"/>
        <dbReference type="ChEBI" id="CHEBI:15378"/>
        <dbReference type="ChEBI" id="CHEBI:30013"/>
        <dbReference type="ChEBI" id="CHEBI:30616"/>
        <dbReference type="ChEBI" id="CHEBI:61977"/>
        <dbReference type="ChEBI" id="CHEBI:456216"/>
        <dbReference type="EC" id="2.7.11.1"/>
    </reaction>
</comment>
<comment type="activity regulation">
    <text evidence="9">Kinase activity is inhibited competitively by amlexanox.</text>
</comment>
<comment type="subunit">
    <text evidence="1 10 11">Homodimer (PubMed:23746807). Interacts with DDX3X, TIRAP and TRAF2 (By similarity). Part of a ternary complex consisting of TANK, TRAF2 and TBK1 (By similarity). Interacts with AZI2, TANK and TBKBP1; these interactions are mutually exclusive and mediate TBK1 activation (By similarity). Interacts with GSK3B; this interaction promotes TBK1 self-association and autophosphorylation (By similarity). Interacts with SIKE1; SIKE1 is associated with TBK1 under physiological condition and dissociated from TBK1 upon viral infection or TLR3 stimulation (By similarity). Interacts with IRF3, leading to IRF3 phosphorylation (By similarity). Interacts with RIGI (By similarity). Interacts with CYLD (By similarity). Interacts with OPTN and TRAF3 (By similarity). Interacts with SRC (By similarity). Interacts with the exocyst complex subunit SEC5/EXOC2; this interaction is sufficient to trigger TBK1 activity (By similarity). Interacts with STING1, leading to STING1 phosphorylation (By similarity). Interacts with IFIT3 (via N-terminus) (By similarity). Interacts with MAVS; interaction only takes place in the presence of IFIT3 and leads to MAVS phosphorylation (By similarity). Interacts (via protein kinase domain) with TTLL12 (via TTL domain); the interaction prevents MAVS binding to TBK1 (By similarity). Interacts with TICAM1; this interaction is enhanced in the presence of WDFY1 and leads to TICAM1 phosphorylation (By similarity). Interacts with TRIM26 (By similarity). Interacts with TRIM23 (By similarity). Interacts with TTC4 and IKBKE (By similarity). Interacts with HNRNPA2B1 (PubMed:31320558). Interacts with DDX3X (By similarity). Interacts with TRIM14 (By similarity). Interacts with CEP170; efficient complex formation may be dependent on the presence of CCDC61 (By similarity). Interacts with TRAF3IP3 (By similarity). Interacts with HSP90AA1; the interaction mediates TBK1 association with TOMM70 (By similarity). Interacts with TAX1BP1 (By similarity). Interacts with kinase IKBKB; the complex interacts with STAT1, leading to phosphorylation of STAT1 on 'Thr-748' by IKBKB (By similarity). Interacts with ICOS; this interaction is critical for the maturation of T follicular regulatory cells (By similarity). Interacts with RNF144B; this interaction prevents TBK1 phosphorylation and subsequent activation (By similarity). Interacts with ASB8; this interaction promotes TBK1 proteasomal degradation (By similarity).</text>
</comment>
<comment type="interaction">
    <interactant intactId="EBI-764193">
        <id>Q9WUN2</id>
    </interactant>
    <interactant intactId="EBI-3862093">
        <id>Q3TBT3</id>
        <label>Sting1</label>
    </interactant>
    <organismsDiffer>false</organismsDiffer>
    <experiments>3</experiments>
</comment>
<comment type="interaction">
    <interactant intactId="EBI-764193">
        <id>Q9WUN2</id>
    </interactant>
    <interactant intactId="EBI-646116">
        <id>P70347</id>
        <label>Tank</label>
    </interactant>
    <organismsDiffer>false</organismsDiffer>
    <experiments>7</experiments>
</comment>
<comment type="interaction">
    <interactant intactId="EBI-764193">
        <id>Q9WUN2</id>
    </interactant>
    <interactant intactId="EBI-764193">
        <id>Q9WUN2</id>
        <label>Tbk1</label>
    </interactant>
    <organismsDiffer>false</organismsDiffer>
    <experiments>5</experiments>
</comment>
<comment type="interaction">
    <interactant intactId="EBI-764193">
        <id>Q9WUN2</id>
    </interactant>
    <interactant intactId="EBI-7987134">
        <id>A2A9T0</id>
        <label>Tbkbp1</label>
    </interactant>
    <organismsDiffer>false</organismsDiffer>
    <experiments>2</experiments>
</comment>
<comment type="interaction">
    <interactant intactId="EBI-764193">
        <id>Q9WUN2</id>
    </interactant>
    <interactant intactId="EBI-3649271">
        <id>Q80UF7</id>
        <label>Ticam1</label>
    </interactant>
    <organismsDiffer>false</organismsDiffer>
    <experiments>2</experiments>
</comment>
<comment type="interaction">
    <interactant intactId="EBI-764193">
        <id>Q9WUN2</id>
    </interactant>
    <interactant intactId="EBI-9544132">
        <id>O41932</id>
        <label>GAMMAHV.ORF11</label>
    </interactant>
    <organismsDiffer>true</organismsDiffer>
    <experiments>3</experiments>
</comment>
<comment type="subcellular location">
    <subcellularLocation>
        <location evidence="1">Cytoplasm</location>
    </subcellularLocation>
    <text evidence="1">Upon mitogen stimulation or triggering of the immune system, TBK1 is recruited to the exocyst by EXOC2.</text>
</comment>
<comment type="domain">
    <text evidence="10">Comprises A N-terminal kinase domain, a ubiquitin-like domain and a C-terminal coiled-coil region mediating homodimerization.</text>
</comment>
<comment type="PTM">
    <text evidence="1">Autophosphorylation at Ser-172 activates the kinase, and is an essential step for virus-triggered signaling. Phosphorylated by IKBKB/IKKB at Ser-172. Phosphorylation requires homodimerization and ubiquitination at Lys-30 and Lys-401. Dephosphorylated at Ser-172 by PPM1B and this negatively regulates its role in mediating antiviral response.</text>
</comment>
<comment type="PTM">
    <text evidence="1">'Lys-63'-linked polyubiquitination by MIB1 after RNA virus infection, or by NRDP1 after LPS stimulation at Lys-30 and Lys-401, participates in kinase activation. 'Lys-48'-linked polyubiquitination at Lys-670 by DTX4 leads to proteasomal degradation. 'Lys-48'-linked polyubiquitination by TRAIP also leads to proteasomal degradation. 'Lys-48'-linked polyubiquitination by TRAF7; leading to proteasomal degradation. 'Lys-63'-linked polyubiquitination by RNF128 at Lys-30 and Lys-401 leads to the activation of antiviral responses. 'Lys-48'-linked polyubiquitination after 'lys-33'-linked deubiquitination by USP38 promotes TBK1 degradation.</text>
</comment>
<comment type="disruption phenotype">
    <text evidence="5 6 7">Mice display embryonic lethality at 14.5 dpc due to massive liver degeneration and apoptosis. Embryonic fibroblasts from mice lacking Tbk1 exhibit dramatically reduced transcription of NF-kappa-B, as well as marked defects in interferon alpha and beta, and RANTES gene expression after infection with Sendai or Newcastle disease virus.</text>
</comment>
<comment type="similarity">
    <text evidence="3">Belongs to the protein kinase superfamily. Ser/Thr protein kinase family. I-kappa-B kinase subfamily.</text>
</comment>
<name>TBK1_MOUSE</name>
<gene>
    <name evidence="13 16" type="primary">Tbk1</name>
</gene>
<proteinExistence type="evidence at protein level"/>
<feature type="chain" id="PRO_0000086744" description="Serine/threonine-protein kinase TBK1">
    <location>
        <begin position="1"/>
        <end position="729"/>
    </location>
</feature>
<feature type="domain" description="Protein kinase" evidence="3">
    <location>
        <begin position="9"/>
        <end position="310"/>
    </location>
</feature>
<feature type="domain" description="Ubiquitin-like">
    <location>
        <begin position="309"/>
        <end position="385"/>
    </location>
</feature>
<feature type="region of interest" description="Interaction with AZI2, TANK and TBKBP1" evidence="1">
    <location>
        <begin position="621"/>
        <end position="729"/>
    </location>
</feature>
<feature type="coiled-coil region" evidence="10">
    <location>
        <begin position="407"/>
        <end position="657"/>
    </location>
</feature>
<feature type="coiled-coil region" evidence="2">
    <location>
        <begin position="658"/>
        <end position="713"/>
    </location>
</feature>
<feature type="active site" description="Proton acceptor" evidence="3">
    <location>
        <position position="135"/>
    </location>
</feature>
<feature type="binding site" evidence="3">
    <location>
        <begin position="15"/>
        <end position="23"/>
    </location>
    <ligand>
        <name>ATP</name>
        <dbReference type="ChEBI" id="CHEBI:30616"/>
    </ligand>
</feature>
<feature type="binding site" evidence="3">
    <location>
        <position position="38"/>
    </location>
    <ligand>
        <name>ATP</name>
        <dbReference type="ChEBI" id="CHEBI:30616"/>
    </ligand>
</feature>
<feature type="modified residue" description="Phosphoserine; by autocatalysis and IKKB" evidence="9">
    <location>
        <position position="172"/>
    </location>
</feature>
<feature type="modified residue" description="Phosphoserine" evidence="1">
    <location>
        <position position="716"/>
    </location>
</feature>
<feature type="cross-link" description="Glycyl lysine isopeptide (Lys-Gly) (interchain with G-Cter in ubiquitin)" evidence="1">
    <location>
        <position position="30"/>
    </location>
</feature>
<feature type="cross-link" description="Glycyl lysine isopeptide (Lys-Gly) (interchain with G-Cter in ubiquitin)" evidence="1">
    <location>
        <position position="401"/>
    </location>
</feature>
<feature type="cross-link" description="Glycyl lysine isopeptide (Lys-Gly) (interchain with G-Cter in ubiquitin)" evidence="1">
    <location>
        <position position="670"/>
    </location>
</feature>
<feature type="sequence conflict" description="In Ref. 3; BAB23440." evidence="15" ref="3">
    <original>L</original>
    <variation>V</variation>
    <location>
        <position position="468"/>
    </location>
</feature>
<feature type="sequence conflict" description="In Ref. 3; BAB23244." evidence="15" ref="3">
    <original>A</original>
    <variation>S</variation>
    <location>
        <position position="594"/>
    </location>
</feature>
<feature type="sequence conflict" description="In Ref. 3; BAB23440." evidence="15" ref="3">
    <original>L</original>
    <variation>S</variation>
    <location>
        <position position="631"/>
    </location>
</feature>
<feature type="strand" evidence="17">
    <location>
        <begin position="5"/>
        <end position="14"/>
    </location>
</feature>
<feature type="strand" evidence="17">
    <location>
        <begin position="22"/>
        <end position="28"/>
    </location>
</feature>
<feature type="turn" evidence="17">
    <location>
        <begin position="29"/>
        <end position="31"/>
    </location>
</feature>
<feature type="strand" evidence="17">
    <location>
        <begin position="34"/>
        <end position="39"/>
    </location>
</feature>
<feature type="strand" evidence="18">
    <location>
        <begin position="45"/>
        <end position="47"/>
    </location>
</feature>
<feature type="helix" evidence="17">
    <location>
        <begin position="49"/>
        <end position="60"/>
    </location>
</feature>
<feature type="strand" evidence="17">
    <location>
        <begin position="70"/>
        <end position="75"/>
    </location>
</feature>
<feature type="turn" evidence="17">
    <location>
        <begin position="77"/>
        <end position="79"/>
    </location>
</feature>
<feature type="strand" evidence="17">
    <location>
        <begin position="82"/>
        <end position="87"/>
    </location>
</feature>
<feature type="helix" evidence="17">
    <location>
        <begin position="94"/>
        <end position="98"/>
    </location>
</feature>
<feature type="helix" evidence="17">
    <location>
        <begin position="101"/>
        <end position="103"/>
    </location>
</feature>
<feature type="helix" evidence="17">
    <location>
        <begin position="109"/>
        <end position="127"/>
    </location>
</feature>
<feature type="strand" evidence="17">
    <location>
        <begin position="128"/>
        <end position="130"/>
    </location>
</feature>
<feature type="helix" evidence="17">
    <location>
        <begin position="138"/>
        <end position="140"/>
    </location>
</feature>
<feature type="strand" evidence="17">
    <location>
        <begin position="141"/>
        <end position="145"/>
    </location>
</feature>
<feature type="strand" evidence="17">
    <location>
        <begin position="149"/>
        <end position="155"/>
    </location>
</feature>
<feature type="helix" evidence="17">
    <location>
        <begin position="176"/>
        <end position="179"/>
    </location>
</feature>
<feature type="helix" evidence="17">
    <location>
        <begin position="182"/>
        <end position="192"/>
    </location>
</feature>
<feature type="strand" evidence="17">
    <location>
        <begin position="194"/>
        <end position="197"/>
    </location>
</feature>
<feature type="strand" evidence="17">
    <location>
        <begin position="200"/>
        <end position="202"/>
    </location>
</feature>
<feature type="helix" evidence="17">
    <location>
        <begin position="203"/>
        <end position="216"/>
    </location>
</feature>
<feature type="strand" evidence="17">
    <location>
        <begin position="220"/>
        <end position="222"/>
    </location>
</feature>
<feature type="helix" evidence="18">
    <location>
        <begin position="226"/>
        <end position="229"/>
    </location>
</feature>
<feature type="helix" evidence="17">
    <location>
        <begin position="231"/>
        <end position="239"/>
    </location>
</feature>
<feature type="strand" evidence="17">
    <location>
        <begin position="247"/>
        <end position="249"/>
    </location>
</feature>
<feature type="strand" evidence="17">
    <location>
        <begin position="252"/>
        <end position="254"/>
    </location>
</feature>
<feature type="strand" evidence="17">
    <location>
        <begin position="258"/>
        <end position="262"/>
    </location>
</feature>
<feature type="helix" evidence="17">
    <location>
        <begin position="271"/>
        <end position="284"/>
    </location>
</feature>
<feature type="helix" evidence="17">
    <location>
        <begin position="289"/>
        <end position="292"/>
    </location>
</feature>
<feature type="helix" evidence="17">
    <location>
        <begin position="295"/>
        <end position="307"/>
    </location>
</feature>
<feature type="strand" evidence="17">
    <location>
        <begin position="309"/>
        <end position="315"/>
    </location>
</feature>
<feature type="turn" evidence="17">
    <location>
        <begin position="316"/>
        <end position="319"/>
    </location>
</feature>
<feature type="strand" evidence="17">
    <location>
        <begin position="320"/>
        <end position="326"/>
    </location>
</feature>
<feature type="strand" evidence="17">
    <location>
        <begin position="328"/>
        <end position="330"/>
    </location>
</feature>
<feature type="helix" evidence="17">
    <location>
        <begin position="332"/>
        <end position="343"/>
    </location>
</feature>
<feature type="helix" evidence="17">
    <location>
        <begin position="347"/>
        <end position="349"/>
    </location>
</feature>
<feature type="strand" evidence="17">
    <location>
        <begin position="351"/>
        <end position="354"/>
    </location>
</feature>
<feature type="strand" evidence="17">
    <location>
        <begin position="357"/>
        <end position="359"/>
    </location>
</feature>
<feature type="helix" evidence="17">
    <location>
        <begin position="367"/>
        <end position="369"/>
    </location>
</feature>
<feature type="strand" evidence="17">
    <location>
        <begin position="375"/>
        <end position="377"/>
    </location>
</feature>
<feature type="strand" evidence="17">
    <location>
        <begin position="379"/>
        <end position="382"/>
    </location>
</feature>
<feature type="helix" evidence="17">
    <location>
        <begin position="408"/>
        <end position="483"/>
    </location>
</feature>
<feature type="strand" evidence="17">
    <location>
        <begin position="484"/>
        <end position="486"/>
    </location>
</feature>
<feature type="strand" evidence="18">
    <location>
        <begin position="491"/>
        <end position="494"/>
    </location>
</feature>
<feature type="helix" evidence="17">
    <location>
        <begin position="495"/>
        <end position="524"/>
    </location>
</feature>
<feature type="strand" evidence="17">
    <location>
        <begin position="530"/>
        <end position="532"/>
    </location>
</feature>
<feature type="helix" evidence="17">
    <location>
        <begin position="536"/>
        <end position="539"/>
    </location>
</feature>
<feature type="helix" evidence="17">
    <location>
        <begin position="544"/>
        <end position="546"/>
    </location>
</feature>
<feature type="helix" evidence="17">
    <location>
        <begin position="548"/>
        <end position="571"/>
    </location>
</feature>
<feature type="helix" evidence="17">
    <location>
        <begin position="577"/>
        <end position="644"/>
    </location>
</feature>
<feature type="helix" evidence="17">
    <location>
        <begin position="645"/>
        <end position="647"/>
    </location>
</feature>
<accession>Q9WUN2</accession>
<accession>Q9CT90</accession>
<accession>Q9DC03</accession>
<dbReference type="EC" id="2.7.11.1" evidence="12"/>
<dbReference type="EMBL" id="AF191839">
    <property type="protein sequence ID" value="AAF05990.1"/>
    <property type="molecule type" value="mRNA"/>
</dbReference>
<dbReference type="EMBL" id="AF145705">
    <property type="protein sequence ID" value="AAD34590.1"/>
    <property type="molecule type" value="mRNA"/>
</dbReference>
<dbReference type="EMBL" id="AK004269">
    <property type="protein sequence ID" value="BAB23244.1"/>
    <property type="molecule type" value="mRNA"/>
</dbReference>
<dbReference type="EMBL" id="AK004649">
    <property type="protein sequence ID" value="BAB23440.1"/>
    <property type="molecule type" value="mRNA"/>
</dbReference>
<dbReference type="CCDS" id="CCDS24212.1"/>
<dbReference type="RefSeq" id="NP_062760.3">
    <property type="nucleotide sequence ID" value="NM_019786.4"/>
</dbReference>
<dbReference type="PDB" id="4JL9">
    <property type="method" value="X-ray"/>
    <property type="resolution" value="3.10 A"/>
    <property type="chains" value="A=2-656"/>
</dbReference>
<dbReference type="PDB" id="4JLC">
    <property type="method" value="X-ray"/>
    <property type="resolution" value="3.00 A"/>
    <property type="chains" value="A=2-656"/>
</dbReference>
<dbReference type="PDB" id="6O8C">
    <property type="method" value="X-ray"/>
    <property type="resolution" value="3.17 A"/>
    <property type="chains" value="A/B=2-657"/>
</dbReference>
<dbReference type="PDBsum" id="4JL9"/>
<dbReference type="PDBsum" id="4JLC"/>
<dbReference type="PDBsum" id="6O8C"/>
<dbReference type="SMR" id="Q9WUN2"/>
<dbReference type="BioGRID" id="208009">
    <property type="interactions" value="46"/>
</dbReference>
<dbReference type="CORUM" id="Q9WUN2"/>
<dbReference type="DIP" id="DIP-29880N"/>
<dbReference type="FunCoup" id="Q9WUN2">
    <property type="interactions" value="5653"/>
</dbReference>
<dbReference type="IntAct" id="Q9WUN2">
    <property type="interactions" value="18"/>
</dbReference>
<dbReference type="MINT" id="Q9WUN2"/>
<dbReference type="STRING" id="10090.ENSMUSP00000020316"/>
<dbReference type="BindingDB" id="Q9WUN2"/>
<dbReference type="ChEMBL" id="CHEMBL2189160"/>
<dbReference type="iPTMnet" id="Q9WUN2"/>
<dbReference type="PhosphoSitePlus" id="Q9WUN2"/>
<dbReference type="PaxDb" id="10090-ENSMUSP00000020316"/>
<dbReference type="ProteomicsDB" id="254666"/>
<dbReference type="Pumba" id="Q9WUN2"/>
<dbReference type="Antibodypedia" id="16584">
    <property type="antibodies" value="625 antibodies from 45 providers"/>
</dbReference>
<dbReference type="DNASU" id="56480"/>
<dbReference type="Ensembl" id="ENSMUST00000020316.4">
    <property type="protein sequence ID" value="ENSMUSP00000020316.3"/>
    <property type="gene ID" value="ENSMUSG00000020115.4"/>
</dbReference>
<dbReference type="GeneID" id="56480"/>
<dbReference type="KEGG" id="mmu:56480"/>
<dbReference type="UCSC" id="uc007hft.3">
    <property type="organism name" value="mouse"/>
</dbReference>
<dbReference type="AGR" id="MGI:1929658"/>
<dbReference type="CTD" id="29110"/>
<dbReference type="MGI" id="MGI:1929658">
    <property type="gene designation" value="Tbk1"/>
</dbReference>
<dbReference type="VEuPathDB" id="HostDB:ENSMUSG00000020115"/>
<dbReference type="eggNOG" id="KOG4250">
    <property type="taxonomic scope" value="Eukaryota"/>
</dbReference>
<dbReference type="GeneTree" id="ENSGT00950000182937"/>
<dbReference type="HOGENOM" id="CLU_000288_101_1_1"/>
<dbReference type="InParanoid" id="Q9WUN2"/>
<dbReference type="OMA" id="WSADMPV"/>
<dbReference type="OrthoDB" id="10013850at2759"/>
<dbReference type="PhylomeDB" id="Q9WUN2"/>
<dbReference type="TreeFam" id="TF324269"/>
<dbReference type="Reactome" id="R-MMU-168928">
    <property type="pathway name" value="DDX58/IFIH1-mediated induction of interferon-alpha/beta"/>
</dbReference>
<dbReference type="Reactome" id="R-MMU-3134975">
    <property type="pathway name" value="Regulation of innate immune responses to cytosolic DNA"/>
</dbReference>
<dbReference type="Reactome" id="R-MMU-3249367">
    <property type="pathway name" value="STAT6-mediated induction of chemokines"/>
</dbReference>
<dbReference type="Reactome" id="R-MMU-3270619">
    <property type="pathway name" value="IRF3-mediated induction of type I IFN"/>
</dbReference>
<dbReference type="Reactome" id="R-MMU-5205685">
    <property type="pathway name" value="PINK1-PRKN Mediated Mitophagy"/>
</dbReference>
<dbReference type="Reactome" id="R-MMU-5357786">
    <property type="pathway name" value="TNFR1-induced proapoptotic signaling"/>
</dbReference>
<dbReference type="Reactome" id="R-MMU-5357905">
    <property type="pathway name" value="Regulation of TNFR1 signaling"/>
</dbReference>
<dbReference type="Reactome" id="R-MMU-9008059">
    <property type="pathway name" value="Interleukin-37 signaling"/>
</dbReference>
<dbReference type="Reactome" id="R-MMU-936440">
    <property type="pathway name" value="Negative regulators of DDX58/IFIH1 signaling"/>
</dbReference>
<dbReference type="Reactome" id="R-MMU-936964">
    <property type="pathway name" value="Activation of IRF3, IRF7 mediated by TBK1, IKKEpsilon (IKBKE)"/>
</dbReference>
<dbReference type="Reactome" id="R-MMU-9824878">
    <property type="pathway name" value="Regulation of TBK1, IKKEpsilon (IKBKE)-mediated activation of IRF3, IRF7"/>
</dbReference>
<dbReference type="BioGRID-ORCS" id="56480">
    <property type="hits" value="22 hits in 81 CRISPR screens"/>
</dbReference>
<dbReference type="ChiTaRS" id="Tbk1">
    <property type="organism name" value="mouse"/>
</dbReference>
<dbReference type="EvolutionaryTrace" id="Q9WUN2"/>
<dbReference type="PRO" id="PR:Q9WUN2"/>
<dbReference type="Proteomes" id="UP000000589">
    <property type="component" value="Chromosome 10"/>
</dbReference>
<dbReference type="RNAct" id="Q9WUN2">
    <property type="molecule type" value="protein"/>
</dbReference>
<dbReference type="Bgee" id="ENSMUSG00000020115">
    <property type="expression patterns" value="Expressed in paneth cell and 277 other cell types or tissues"/>
</dbReference>
<dbReference type="ExpressionAtlas" id="Q9WUN2">
    <property type="expression patterns" value="baseline and differential"/>
</dbReference>
<dbReference type="GO" id="GO:0005737">
    <property type="term" value="C:cytoplasm"/>
    <property type="evidence" value="ECO:0000250"/>
    <property type="project" value="UniProtKB"/>
</dbReference>
<dbReference type="GO" id="GO:0005829">
    <property type="term" value="C:cytosol"/>
    <property type="evidence" value="ECO:0000304"/>
    <property type="project" value="Reactome"/>
</dbReference>
<dbReference type="GO" id="GO:0005654">
    <property type="term" value="C:nucleoplasm"/>
    <property type="evidence" value="ECO:0007669"/>
    <property type="project" value="Ensembl"/>
</dbReference>
<dbReference type="GO" id="GO:0005524">
    <property type="term" value="F:ATP binding"/>
    <property type="evidence" value="ECO:0007669"/>
    <property type="project" value="UniProtKB-KW"/>
</dbReference>
<dbReference type="GO" id="GO:0042802">
    <property type="term" value="F:identical protein binding"/>
    <property type="evidence" value="ECO:0000353"/>
    <property type="project" value="IntAct"/>
</dbReference>
<dbReference type="GO" id="GO:0003676">
    <property type="term" value="F:nucleic acid binding"/>
    <property type="evidence" value="ECO:0000314"/>
    <property type="project" value="MGI"/>
</dbReference>
<dbReference type="GO" id="GO:0051219">
    <property type="term" value="F:phosphoprotein binding"/>
    <property type="evidence" value="ECO:0007669"/>
    <property type="project" value="Ensembl"/>
</dbReference>
<dbReference type="GO" id="GO:0019903">
    <property type="term" value="F:protein phosphatase binding"/>
    <property type="evidence" value="ECO:0000353"/>
    <property type="project" value="ARUK-UCL"/>
</dbReference>
<dbReference type="GO" id="GO:0106310">
    <property type="term" value="F:protein serine kinase activity"/>
    <property type="evidence" value="ECO:0007669"/>
    <property type="project" value="Ensembl"/>
</dbReference>
<dbReference type="GO" id="GO:0004674">
    <property type="term" value="F:protein serine/threonine kinase activity"/>
    <property type="evidence" value="ECO:0000314"/>
    <property type="project" value="UniProtKB"/>
</dbReference>
<dbReference type="GO" id="GO:0061629">
    <property type="term" value="F:RNA polymerase II-specific DNA-binding transcription factor binding"/>
    <property type="evidence" value="ECO:0007669"/>
    <property type="project" value="Ensembl"/>
</dbReference>
<dbReference type="GO" id="GO:0002218">
    <property type="term" value="P:activation of innate immune response"/>
    <property type="evidence" value="ECO:0000315"/>
    <property type="project" value="MGI"/>
</dbReference>
<dbReference type="GO" id="GO:0140374">
    <property type="term" value="P:antiviral innate immune response"/>
    <property type="evidence" value="ECO:0007669"/>
    <property type="project" value="Ensembl"/>
</dbReference>
<dbReference type="GO" id="GO:0002753">
    <property type="term" value="P:cytoplasmic pattern recognition receptor signaling pathway"/>
    <property type="evidence" value="ECO:0007669"/>
    <property type="project" value="Ensembl"/>
</dbReference>
<dbReference type="GO" id="GO:0050830">
    <property type="term" value="P:defense response to Gram-positive bacterium"/>
    <property type="evidence" value="ECO:0000315"/>
    <property type="project" value="MGI"/>
</dbReference>
<dbReference type="GO" id="GO:0044565">
    <property type="term" value="P:dendritic cell proliferation"/>
    <property type="evidence" value="ECO:0000316"/>
    <property type="project" value="MGI"/>
</dbReference>
<dbReference type="GO" id="GO:0045087">
    <property type="term" value="P:innate immune response"/>
    <property type="evidence" value="ECO:0000250"/>
    <property type="project" value="UniProtKB"/>
</dbReference>
<dbReference type="GO" id="GO:0010629">
    <property type="term" value="P:negative regulation of gene expression"/>
    <property type="evidence" value="ECO:0000315"/>
    <property type="project" value="UniProtKB"/>
</dbReference>
<dbReference type="GO" id="GO:1904262">
    <property type="term" value="P:negative regulation of TORC1 signaling"/>
    <property type="evidence" value="ECO:0000250"/>
    <property type="project" value="UniProtKB"/>
</dbReference>
<dbReference type="GO" id="GO:0018105">
    <property type="term" value="P:peptidyl-serine phosphorylation"/>
    <property type="evidence" value="ECO:0000314"/>
    <property type="project" value="ParkinsonsUK-UCL"/>
</dbReference>
<dbReference type="GO" id="GO:0018107">
    <property type="term" value="P:peptidyl-threonine phosphorylation"/>
    <property type="evidence" value="ECO:0000250"/>
    <property type="project" value="UniProtKB"/>
</dbReference>
<dbReference type="GO" id="GO:0043123">
    <property type="term" value="P:positive regulation of canonical NF-kappaB signal transduction"/>
    <property type="evidence" value="ECO:0007669"/>
    <property type="project" value="Ensembl"/>
</dbReference>
<dbReference type="GO" id="GO:0032727">
    <property type="term" value="P:positive regulation of interferon-alpha production"/>
    <property type="evidence" value="ECO:0007669"/>
    <property type="project" value="Ensembl"/>
</dbReference>
<dbReference type="GO" id="GO:0032728">
    <property type="term" value="P:positive regulation of interferon-beta production"/>
    <property type="evidence" value="ECO:0000315"/>
    <property type="project" value="MGI"/>
</dbReference>
<dbReference type="GO" id="GO:1904263">
    <property type="term" value="P:positive regulation of TORC1 signaling"/>
    <property type="evidence" value="ECO:0000250"/>
    <property type="project" value="UniProtKB"/>
</dbReference>
<dbReference type="GO" id="GO:1904515">
    <property type="term" value="P:positive regulation of TORC2 signaling"/>
    <property type="evidence" value="ECO:0000314"/>
    <property type="project" value="UniProtKB"/>
</dbReference>
<dbReference type="GO" id="GO:0045944">
    <property type="term" value="P:positive regulation of transcription by RNA polymerase II"/>
    <property type="evidence" value="ECO:0007669"/>
    <property type="project" value="Ensembl"/>
</dbReference>
<dbReference type="GO" id="GO:0060340">
    <property type="term" value="P:positive regulation of type I interferon-mediated signaling pathway"/>
    <property type="evidence" value="ECO:0000315"/>
    <property type="project" value="UniProtKB"/>
</dbReference>
<dbReference type="GO" id="GO:1904417">
    <property type="term" value="P:positive regulation of xenophagy"/>
    <property type="evidence" value="ECO:0000315"/>
    <property type="project" value="ParkinsonsUK-UCL"/>
</dbReference>
<dbReference type="GO" id="GO:0006468">
    <property type="term" value="P:protein phosphorylation"/>
    <property type="evidence" value="ECO:0000250"/>
    <property type="project" value="UniProtKB"/>
</dbReference>
<dbReference type="GO" id="GO:0010468">
    <property type="term" value="P:regulation of gene expression"/>
    <property type="evidence" value="ECO:0000316"/>
    <property type="project" value="MGI"/>
</dbReference>
<dbReference type="GO" id="GO:0019222">
    <property type="term" value="P:regulation of metabolic process"/>
    <property type="evidence" value="ECO:0000316"/>
    <property type="project" value="MGI"/>
</dbReference>
<dbReference type="GO" id="GO:0032479">
    <property type="term" value="P:regulation of type I interferon production"/>
    <property type="evidence" value="ECO:0000250"/>
    <property type="project" value="UniProtKB"/>
</dbReference>
<dbReference type="GO" id="GO:0061470">
    <property type="term" value="P:T follicular helper cell differentiation"/>
    <property type="evidence" value="ECO:0007669"/>
    <property type="project" value="Ensembl"/>
</dbReference>
<dbReference type="GO" id="GO:0034142">
    <property type="term" value="P:toll-like receptor 4 signaling pathway"/>
    <property type="evidence" value="ECO:0007669"/>
    <property type="project" value="Ensembl"/>
</dbReference>
<dbReference type="CDD" id="cd13988">
    <property type="entry name" value="STKc_TBK1"/>
    <property type="match status" value="1"/>
</dbReference>
<dbReference type="CDD" id="cd21954">
    <property type="entry name" value="TBK1_C"/>
    <property type="match status" value="1"/>
</dbReference>
<dbReference type="CDD" id="cd17127">
    <property type="entry name" value="Ubl_TBK1"/>
    <property type="match status" value="1"/>
</dbReference>
<dbReference type="FunFam" id="1.10.510.10:FF:000100">
    <property type="entry name" value="inhibitor of nuclear factor kappa-B kinase subunit epsilon"/>
    <property type="match status" value="1"/>
</dbReference>
<dbReference type="FunFam" id="1.20.1270.420:FF:000001">
    <property type="entry name" value="Serine/threonine-protein kinase TBK1"/>
    <property type="match status" value="1"/>
</dbReference>
<dbReference type="FunFam" id="3.30.200.20:FF:000106">
    <property type="entry name" value="serine/threonine-protein kinase TBK1 isoform X1"/>
    <property type="match status" value="1"/>
</dbReference>
<dbReference type="FunFam" id="3.10.20.90:FF:000112">
    <property type="entry name" value="TANK binding kinase TBK1"/>
    <property type="match status" value="1"/>
</dbReference>
<dbReference type="Gene3D" id="1.20.1270.420">
    <property type="match status" value="1"/>
</dbReference>
<dbReference type="Gene3D" id="3.10.20.90">
    <property type="entry name" value="Phosphatidylinositol 3-kinase Catalytic Subunit, Chain A, domain 1"/>
    <property type="match status" value="1"/>
</dbReference>
<dbReference type="Gene3D" id="3.30.200.20">
    <property type="entry name" value="Phosphorylase Kinase, domain 1"/>
    <property type="match status" value="1"/>
</dbReference>
<dbReference type="Gene3D" id="1.10.510.10">
    <property type="entry name" value="Transferase(Phosphotransferase) domain 1"/>
    <property type="match status" value="1"/>
</dbReference>
<dbReference type="InterPro" id="IPR051180">
    <property type="entry name" value="IKK"/>
</dbReference>
<dbReference type="InterPro" id="IPR011009">
    <property type="entry name" value="Kinase-like_dom_sf"/>
</dbReference>
<dbReference type="InterPro" id="IPR000719">
    <property type="entry name" value="Prot_kinase_dom"/>
</dbReference>
<dbReference type="InterPro" id="IPR017441">
    <property type="entry name" value="Protein_kinase_ATP_BS"/>
</dbReference>
<dbReference type="InterPro" id="IPR041309">
    <property type="entry name" value="TBK1_CCD1"/>
</dbReference>
<dbReference type="InterPro" id="IPR041087">
    <property type="entry name" value="TBK1_ULD"/>
</dbReference>
<dbReference type="PANTHER" id="PTHR22969">
    <property type="entry name" value="IKB KINASE"/>
    <property type="match status" value="1"/>
</dbReference>
<dbReference type="PANTHER" id="PTHR22969:SF14">
    <property type="entry name" value="SERINE_THREONINE-PROTEIN KINASE TBK1"/>
    <property type="match status" value="1"/>
</dbReference>
<dbReference type="Pfam" id="PF00069">
    <property type="entry name" value="Pkinase"/>
    <property type="match status" value="1"/>
</dbReference>
<dbReference type="Pfam" id="PF18394">
    <property type="entry name" value="TBK1_CCD1"/>
    <property type="match status" value="1"/>
</dbReference>
<dbReference type="Pfam" id="PF18396">
    <property type="entry name" value="TBK1_ULD"/>
    <property type="match status" value="1"/>
</dbReference>
<dbReference type="SMART" id="SM00220">
    <property type="entry name" value="S_TKc"/>
    <property type="match status" value="1"/>
</dbReference>
<dbReference type="SUPFAM" id="SSF56112">
    <property type="entry name" value="Protein kinase-like (PK-like)"/>
    <property type="match status" value="1"/>
</dbReference>
<dbReference type="PROSITE" id="PS00107">
    <property type="entry name" value="PROTEIN_KINASE_ATP"/>
    <property type="match status" value="1"/>
</dbReference>
<dbReference type="PROSITE" id="PS50011">
    <property type="entry name" value="PROTEIN_KINASE_DOM"/>
    <property type="match status" value="1"/>
</dbReference>
<reference key="1">
    <citation type="journal article" date="1999" name="EMBO J.">
        <title>NF-kB activation by a signaling complex containing TRAF2, TANK, and TBK1, a novel IKK-related kinase.</title>
        <authorList>
            <person name="Pomerantz J.L."/>
            <person name="Baltimore D."/>
        </authorList>
    </citation>
    <scope>NUCLEOTIDE SEQUENCE [MRNA]</scope>
    <scope>FUNCTION</scope>
    <source>
        <tissue>Spleen</tissue>
    </source>
</reference>
<reference key="2">
    <citation type="submission" date="1999-04" db="EMBL/GenBank/DDBJ databases">
        <title>Mus musculus homolog to human T2K cDNA.</title>
        <authorList>
            <person name="Wisniewski D."/>
            <person name="Marcy A.I."/>
        </authorList>
    </citation>
    <scope>NUCLEOTIDE SEQUENCE [MRNA]</scope>
    <source>
        <strain>Swiss Webster / NIH</strain>
    </source>
</reference>
<reference key="3">
    <citation type="journal article" date="2005" name="Science">
        <title>The transcriptional landscape of the mammalian genome.</title>
        <authorList>
            <person name="Carninci P."/>
            <person name="Kasukawa T."/>
            <person name="Katayama S."/>
            <person name="Gough J."/>
            <person name="Frith M.C."/>
            <person name="Maeda N."/>
            <person name="Oyama R."/>
            <person name="Ravasi T."/>
            <person name="Lenhard B."/>
            <person name="Wells C."/>
            <person name="Kodzius R."/>
            <person name="Shimokawa K."/>
            <person name="Bajic V.B."/>
            <person name="Brenner S.E."/>
            <person name="Batalov S."/>
            <person name="Forrest A.R."/>
            <person name="Zavolan M."/>
            <person name="Davis M.J."/>
            <person name="Wilming L.G."/>
            <person name="Aidinis V."/>
            <person name="Allen J.E."/>
            <person name="Ambesi-Impiombato A."/>
            <person name="Apweiler R."/>
            <person name="Aturaliya R.N."/>
            <person name="Bailey T.L."/>
            <person name="Bansal M."/>
            <person name="Baxter L."/>
            <person name="Beisel K.W."/>
            <person name="Bersano T."/>
            <person name="Bono H."/>
            <person name="Chalk A.M."/>
            <person name="Chiu K.P."/>
            <person name="Choudhary V."/>
            <person name="Christoffels A."/>
            <person name="Clutterbuck D.R."/>
            <person name="Crowe M.L."/>
            <person name="Dalla E."/>
            <person name="Dalrymple B.P."/>
            <person name="de Bono B."/>
            <person name="Della Gatta G."/>
            <person name="di Bernardo D."/>
            <person name="Down T."/>
            <person name="Engstrom P."/>
            <person name="Fagiolini M."/>
            <person name="Faulkner G."/>
            <person name="Fletcher C.F."/>
            <person name="Fukushima T."/>
            <person name="Furuno M."/>
            <person name="Futaki S."/>
            <person name="Gariboldi M."/>
            <person name="Georgii-Hemming P."/>
            <person name="Gingeras T.R."/>
            <person name="Gojobori T."/>
            <person name="Green R.E."/>
            <person name="Gustincich S."/>
            <person name="Harbers M."/>
            <person name="Hayashi Y."/>
            <person name="Hensch T.K."/>
            <person name="Hirokawa N."/>
            <person name="Hill D."/>
            <person name="Huminiecki L."/>
            <person name="Iacono M."/>
            <person name="Ikeo K."/>
            <person name="Iwama A."/>
            <person name="Ishikawa T."/>
            <person name="Jakt M."/>
            <person name="Kanapin A."/>
            <person name="Katoh M."/>
            <person name="Kawasawa Y."/>
            <person name="Kelso J."/>
            <person name="Kitamura H."/>
            <person name="Kitano H."/>
            <person name="Kollias G."/>
            <person name="Krishnan S.P."/>
            <person name="Kruger A."/>
            <person name="Kummerfeld S.K."/>
            <person name="Kurochkin I.V."/>
            <person name="Lareau L.F."/>
            <person name="Lazarevic D."/>
            <person name="Lipovich L."/>
            <person name="Liu J."/>
            <person name="Liuni S."/>
            <person name="McWilliam S."/>
            <person name="Madan Babu M."/>
            <person name="Madera M."/>
            <person name="Marchionni L."/>
            <person name="Matsuda H."/>
            <person name="Matsuzawa S."/>
            <person name="Miki H."/>
            <person name="Mignone F."/>
            <person name="Miyake S."/>
            <person name="Morris K."/>
            <person name="Mottagui-Tabar S."/>
            <person name="Mulder N."/>
            <person name="Nakano N."/>
            <person name="Nakauchi H."/>
            <person name="Ng P."/>
            <person name="Nilsson R."/>
            <person name="Nishiguchi S."/>
            <person name="Nishikawa S."/>
            <person name="Nori F."/>
            <person name="Ohara O."/>
            <person name="Okazaki Y."/>
            <person name="Orlando V."/>
            <person name="Pang K.C."/>
            <person name="Pavan W.J."/>
            <person name="Pavesi G."/>
            <person name="Pesole G."/>
            <person name="Petrovsky N."/>
            <person name="Piazza S."/>
            <person name="Reed J."/>
            <person name="Reid J.F."/>
            <person name="Ring B.Z."/>
            <person name="Ringwald M."/>
            <person name="Rost B."/>
            <person name="Ruan Y."/>
            <person name="Salzberg S.L."/>
            <person name="Sandelin A."/>
            <person name="Schneider C."/>
            <person name="Schoenbach C."/>
            <person name="Sekiguchi K."/>
            <person name="Semple C.A."/>
            <person name="Seno S."/>
            <person name="Sessa L."/>
            <person name="Sheng Y."/>
            <person name="Shibata Y."/>
            <person name="Shimada H."/>
            <person name="Shimada K."/>
            <person name="Silva D."/>
            <person name="Sinclair B."/>
            <person name="Sperling S."/>
            <person name="Stupka E."/>
            <person name="Sugiura K."/>
            <person name="Sultana R."/>
            <person name="Takenaka Y."/>
            <person name="Taki K."/>
            <person name="Tammoja K."/>
            <person name="Tan S.L."/>
            <person name="Tang S."/>
            <person name="Taylor M.S."/>
            <person name="Tegner J."/>
            <person name="Teichmann S.A."/>
            <person name="Ueda H.R."/>
            <person name="van Nimwegen E."/>
            <person name="Verardo R."/>
            <person name="Wei C.L."/>
            <person name="Yagi K."/>
            <person name="Yamanishi H."/>
            <person name="Zabarovsky E."/>
            <person name="Zhu S."/>
            <person name="Zimmer A."/>
            <person name="Hide W."/>
            <person name="Bult C."/>
            <person name="Grimmond S.M."/>
            <person name="Teasdale R.D."/>
            <person name="Liu E.T."/>
            <person name="Brusic V."/>
            <person name="Quackenbush J."/>
            <person name="Wahlestedt C."/>
            <person name="Mattick J.S."/>
            <person name="Hume D.A."/>
            <person name="Kai C."/>
            <person name="Sasaki D."/>
            <person name="Tomaru Y."/>
            <person name="Fukuda S."/>
            <person name="Kanamori-Katayama M."/>
            <person name="Suzuki M."/>
            <person name="Aoki J."/>
            <person name="Arakawa T."/>
            <person name="Iida J."/>
            <person name="Imamura K."/>
            <person name="Itoh M."/>
            <person name="Kato T."/>
            <person name="Kawaji H."/>
            <person name="Kawagashira N."/>
            <person name="Kawashima T."/>
            <person name="Kojima M."/>
            <person name="Kondo S."/>
            <person name="Konno H."/>
            <person name="Nakano K."/>
            <person name="Ninomiya N."/>
            <person name="Nishio T."/>
            <person name="Okada M."/>
            <person name="Plessy C."/>
            <person name="Shibata K."/>
            <person name="Shiraki T."/>
            <person name="Suzuki S."/>
            <person name="Tagami M."/>
            <person name="Waki K."/>
            <person name="Watahiki A."/>
            <person name="Okamura-Oho Y."/>
            <person name="Suzuki H."/>
            <person name="Kawai J."/>
            <person name="Hayashizaki Y."/>
        </authorList>
    </citation>
    <scope>NUCLEOTIDE SEQUENCE [LARGE SCALE MRNA]</scope>
    <source>
        <strain>C57BL/6J</strain>
        <tissue>Lung</tissue>
    </source>
</reference>
<reference key="4">
    <citation type="journal article" date="2000" name="EMBO J.">
        <title>Deficiency of T2K leads to apoptotic liver degeneration and impaired NF-kappaB-dependent gene transcription.</title>
        <authorList>
            <person name="Bonnard M."/>
            <person name="Mirtsos C."/>
            <person name="Suzuki S."/>
            <person name="Graham K."/>
            <person name="Huang J."/>
            <person name="Ng M."/>
            <person name="Itie A."/>
            <person name="Wakeham A."/>
            <person name="Shahinian A."/>
            <person name="Henzel W.J."/>
            <person name="Elia A.J."/>
            <person name="Shillinglaw W."/>
            <person name="Mak T.W."/>
            <person name="Cao Z."/>
            <person name="Yeh W.-C."/>
        </authorList>
    </citation>
    <scope>DISRUPTION PHENOTYPE</scope>
</reference>
<reference key="5">
    <citation type="journal article" date="2004" name="J. Exp. Med.">
        <title>The roles of two IkappaB kinase-related kinases in lipopolysaccharide and double stranded RNA signaling and viral infection.</title>
        <authorList>
            <person name="Hemmi H."/>
            <person name="Takeuchi O."/>
            <person name="Sato S."/>
            <person name="Yamamoto M."/>
            <person name="Kaisho T."/>
            <person name="Sanjo H."/>
            <person name="Kawai T."/>
            <person name="Hoshino K."/>
            <person name="Takeda K."/>
            <person name="Akira S."/>
        </authorList>
    </citation>
    <scope>FUNCTION</scope>
    <scope>DISRUPTION PHENOTYPE</scope>
</reference>
<reference key="6">
    <citation type="journal article" date="2004" name="Proc. Natl. Acad. Sci. U.S.A.">
        <title>IFN-regulatory factor 3-dependent gene expression is defective in Tbk1-deficient mouse embryonic fibroblasts.</title>
        <authorList>
            <person name="McWhirter S.M."/>
            <person name="Fitzgerald K.A."/>
            <person name="Rosains J."/>
            <person name="Rowe D.C."/>
            <person name="Golenbock D.T."/>
            <person name="Maniatis T."/>
        </authorList>
    </citation>
    <scope>DISRUPTION PHENOTYPE</scope>
</reference>
<reference key="7">
    <citation type="journal article" date="2005" name="J. Immunol.">
        <title>Immune activation of type I IFNs by Listeria monocytogenes occurs independently of TLR4, TLR2, and receptor interacting protein 2 but involves TNFR-associated NF kappa B kinase-binding kinase 1.</title>
        <authorList>
            <person name="O'Connell R.M."/>
            <person name="Vaidya S.A."/>
            <person name="Perry A.K."/>
            <person name="Saha S.K."/>
            <person name="Dempsey P.W."/>
            <person name="Cheng G."/>
        </authorList>
    </citation>
    <scope>FUNCTION</scope>
</reference>
<reference key="8">
    <citation type="journal article" date="2010" name="Cell">
        <title>A tissue-specific atlas of mouse protein phosphorylation and expression.</title>
        <authorList>
            <person name="Huttlin E.L."/>
            <person name="Jedrychowski M.P."/>
            <person name="Elias J.E."/>
            <person name="Goswami T."/>
            <person name="Rad R."/>
            <person name="Beausoleil S.A."/>
            <person name="Villen J."/>
            <person name="Haas W."/>
            <person name="Sowa M.E."/>
            <person name="Gygi S.P."/>
        </authorList>
    </citation>
    <scope>IDENTIFICATION BY MASS SPECTROMETRY [LARGE SCALE ANALYSIS]</scope>
    <source>
        <tissue>Brain</tissue>
        <tissue>Heart</tissue>
        <tissue>Lung</tissue>
        <tissue>Spleen</tissue>
        <tissue>Testis</tissue>
    </source>
</reference>
<reference key="9">
    <citation type="journal article" date="2013" name="Nat. Med.">
        <title>An inhibitor of the protein kinases TBK1 and IKK-[?] improves obesity-related metabolic dysfunctions in mice.</title>
        <authorList>
            <person name="Reilly S.M."/>
            <person name="Chiang S.H."/>
            <person name="Decker S.J."/>
            <person name="Chang L."/>
            <person name="Uhm M."/>
            <person name="Larsen M.J."/>
            <person name="Rubin J.R."/>
            <person name="Mowers J."/>
            <person name="White N.M."/>
            <person name="Hochberg I."/>
            <person name="Downes M."/>
            <person name="Yu R.T."/>
            <person name="Liddle C."/>
            <person name="Evans R.M."/>
            <person name="Oh D."/>
            <person name="Li P."/>
            <person name="Olefsky J.M."/>
            <person name="Saltiel A.R."/>
        </authorList>
    </citation>
    <scope>FUNCTION IN ENERGY BALANCE</scope>
    <scope>ACTIVITY REGULATION</scope>
    <scope>PHOSPHORYLATION AT SER-172</scope>
</reference>
<reference key="10">
    <citation type="journal article" date="2019" name="Science">
        <title>Nuclear hnRNPA2B1 initiates and amplifies the innate immune response to DNA viruses.</title>
        <authorList>
            <person name="Wang L."/>
            <person name="Wen M."/>
            <person name="Cao X."/>
        </authorList>
    </citation>
    <scope>INTERACTION WITH HNRNPA2B1</scope>
</reference>
<reference key="11">
    <citation type="journal article" date="2021" name="J. Biol. Chem.">
        <title>The innate immune kinase TBK1 directly increases mTORC2 activity and downstream signaling to Akt.</title>
        <authorList>
            <person name="Tooley A.S."/>
            <person name="Kazyken D."/>
            <person name="Bodur C."/>
            <person name="Gonzalez I.E."/>
            <person name="Fingar D.C."/>
        </authorList>
    </citation>
    <scope>FUNCTION</scope>
    <scope>CATALYTIC ACTIVITY</scope>
</reference>
<reference key="12">
    <citation type="journal article" date="2013" name="Structure">
        <title>Structural insights into the functions of TBK1 in innate antimicrobial immunity.</title>
        <authorList>
            <person name="Shu C."/>
            <person name="Sankaran B."/>
            <person name="Chaton C.T."/>
            <person name="Herr A.B."/>
            <person name="Mishra A."/>
            <person name="Peng J."/>
            <person name="Li P."/>
        </authorList>
    </citation>
    <scope>X-RAY CRYSTALLOGRAPHY (3.0 ANGSTROMS) OF 2-656 IN COMPLEX WITH INHIBITORS</scope>
    <scope>SUBUNIT</scope>
    <scope>COILED-COIL</scope>
</reference>
<keyword id="KW-0002">3D-structure</keyword>
<keyword id="KW-0051">Antiviral defense</keyword>
<keyword id="KW-0067">ATP-binding</keyword>
<keyword id="KW-0175">Coiled coil</keyword>
<keyword id="KW-0963">Cytoplasm</keyword>
<keyword id="KW-0391">Immunity</keyword>
<keyword id="KW-0399">Innate immunity</keyword>
<keyword id="KW-1017">Isopeptide bond</keyword>
<keyword id="KW-0418">Kinase</keyword>
<keyword id="KW-0547">Nucleotide-binding</keyword>
<keyword id="KW-0597">Phosphoprotein</keyword>
<keyword id="KW-1185">Reference proteome</keyword>
<keyword id="KW-0723">Serine/threonine-protein kinase</keyword>
<keyword id="KW-0808">Transferase</keyword>
<keyword id="KW-0832">Ubl conjugation</keyword>
<evidence type="ECO:0000250" key="1">
    <source>
        <dbReference type="UniProtKB" id="Q9UHD2"/>
    </source>
</evidence>
<evidence type="ECO:0000255" key="2"/>
<evidence type="ECO:0000255" key="3">
    <source>
        <dbReference type="PROSITE-ProRule" id="PRU00159"/>
    </source>
</evidence>
<evidence type="ECO:0000269" key="4">
    <source>
    </source>
</evidence>
<evidence type="ECO:0000269" key="5">
    <source>
    </source>
</evidence>
<evidence type="ECO:0000269" key="6">
    <source>
    </source>
</evidence>
<evidence type="ECO:0000269" key="7">
    <source>
    </source>
</evidence>
<evidence type="ECO:0000269" key="8">
    <source>
    </source>
</evidence>
<evidence type="ECO:0000269" key="9">
    <source>
    </source>
</evidence>
<evidence type="ECO:0000269" key="10">
    <source>
    </source>
</evidence>
<evidence type="ECO:0000269" key="11">
    <source>
    </source>
</evidence>
<evidence type="ECO:0000269" key="12">
    <source>
    </source>
</evidence>
<evidence type="ECO:0000303" key="13">
    <source>
    </source>
</evidence>
<evidence type="ECO:0000303" key="14">
    <source ref="2"/>
</evidence>
<evidence type="ECO:0000305" key="15"/>
<evidence type="ECO:0000312" key="16">
    <source>
        <dbReference type="MGI" id="MGI:1929658"/>
    </source>
</evidence>
<evidence type="ECO:0007829" key="17">
    <source>
        <dbReference type="PDB" id="4JLC"/>
    </source>
</evidence>
<evidence type="ECO:0007829" key="18">
    <source>
        <dbReference type="PDB" id="6O8C"/>
    </source>
</evidence>
<sequence length="729" mass="83425">MQSTSNHLWLLSDILGQGATANVFRGRHKKTGDLYAVKVFNNISFLRPVDVQMREFEVLKKLNHKNIVKLFAIEEETTTRHKVLIMEFCPCGSLYTVLEEPSNAYGLPESEFLIVLRDVVGGMNHLRENGIVHRDIKPGNIMRVIGEDGQSVYKLTDFGAARELEDDEQFVSLYGTEEYLHPDMYERAVLRKDHQKKYGATVDLWSVGVTFYHAATGSLPFRPFEGPRRNKEVMYKIITGKPSGAISGVQKAENGPIDWSGDMPLSCSLSQGLQALLTPVLANILEADQEKCWGFDQFFAETSDVLHRMVIHVFSLQHMTAHKIYIHSYNTAAVFHELVYKQTKIVSSNQELIYEGRRLVLELGRLAQHFPKTTEENPIFVTSREQLNTVGLRYEKISLPKIHPRYDLDGDASMAKAVTGVVCYACRTASTLLLYQELMRKGVRWLVELVKDDYNETVHKKTEVVITLDFCIRNIEKTVKVYEKLMKVNLEAAELGEISDIHTKLLRLSSSQGTIESSLQDISSRLSPGGLLADTWAHQEGTHPRDRNVEKLQVLLNCITEIYYQFKKDKAERRLAYNEEQIHKFDKQKLYYHATKAMSHFSEECVRKYEAFKDKSEEWMRKMLHLRKQLLSLTNQCFDIEEEVSKYQDYTNELQETLPQKMLAASGGVKHAMAPIYPSSNTLVEMTLGMKKLKEEMEGVVKELAENNHILERFGSLTMDGGLRNVDCL</sequence>
<organism>
    <name type="scientific">Mus musculus</name>
    <name type="common">Mouse</name>
    <dbReference type="NCBI Taxonomy" id="10090"/>
    <lineage>
        <taxon>Eukaryota</taxon>
        <taxon>Metazoa</taxon>
        <taxon>Chordata</taxon>
        <taxon>Craniata</taxon>
        <taxon>Vertebrata</taxon>
        <taxon>Euteleostomi</taxon>
        <taxon>Mammalia</taxon>
        <taxon>Eutheria</taxon>
        <taxon>Euarchontoglires</taxon>
        <taxon>Glires</taxon>
        <taxon>Rodentia</taxon>
        <taxon>Myomorpha</taxon>
        <taxon>Muroidea</taxon>
        <taxon>Muridae</taxon>
        <taxon>Murinae</taxon>
        <taxon>Mus</taxon>
        <taxon>Mus</taxon>
    </lineage>
</organism>